<sequence length="448" mass="49068">MSQTNPKVGIVSLGCSKALVDSERILTKLRAEGYDISGSYDGADVVIVNTCGFLDSARAESLEAIGEALAENGKVIVTGCMGGDEKAIRSAHPSVLAVSGPHQYQAVVEAVHAAIPPLHDPKLSLVPPEGLHLTPHHYAYLKISEGCNNSCSFCIIPDIRGPLMSRPAADVLGEAERLAEAGVRELLVISQDTSAYGLDLRHAESTWRGRPVRAHLTDLASALGELGIWIRLHYVYPYPHVDEIIPLMAEGKILPYLDIPFQHASPNVLKAMRRPANQEKVLGRIRSWRETCPDLTLRSTFIVGFPGETEEDFDSLLGWLEEAQLDRVGCFKYEDVKGAPANAFADQVDEDVKEERHQRFMEAARQIADERGAAKEGTRIEVIIDEVDEEGAIGRSKADSPEVDGAVFMNGETDLEPGDLVIVEVEAAEDYDLWGDVVERLPPPRPRR</sequence>
<evidence type="ECO:0000255" key="1">
    <source>
        <dbReference type="HAMAP-Rule" id="MF_01865"/>
    </source>
</evidence>
<evidence type="ECO:0000255" key="2">
    <source>
        <dbReference type="PROSITE-ProRule" id="PRU01266"/>
    </source>
</evidence>
<feature type="chain" id="PRO_0000374885" description="Ribosomal protein uS12 methylthiotransferase RimO">
    <location>
        <begin position="1"/>
        <end position="448"/>
    </location>
</feature>
<feature type="domain" description="MTTase N-terminal" evidence="1">
    <location>
        <begin position="6"/>
        <end position="116"/>
    </location>
</feature>
<feature type="domain" description="Radical SAM core" evidence="2">
    <location>
        <begin position="133"/>
        <end position="371"/>
    </location>
</feature>
<feature type="domain" description="TRAM" evidence="1">
    <location>
        <begin position="373"/>
        <end position="439"/>
    </location>
</feature>
<feature type="binding site" evidence="1">
    <location>
        <position position="15"/>
    </location>
    <ligand>
        <name>[4Fe-4S] cluster</name>
        <dbReference type="ChEBI" id="CHEBI:49883"/>
        <label>1</label>
    </ligand>
</feature>
<feature type="binding site" evidence="1">
    <location>
        <position position="51"/>
    </location>
    <ligand>
        <name>[4Fe-4S] cluster</name>
        <dbReference type="ChEBI" id="CHEBI:49883"/>
        <label>1</label>
    </ligand>
</feature>
<feature type="binding site" evidence="1">
    <location>
        <position position="80"/>
    </location>
    <ligand>
        <name>[4Fe-4S] cluster</name>
        <dbReference type="ChEBI" id="CHEBI:49883"/>
        <label>1</label>
    </ligand>
</feature>
<feature type="binding site" evidence="1">
    <location>
        <position position="147"/>
    </location>
    <ligand>
        <name>[4Fe-4S] cluster</name>
        <dbReference type="ChEBI" id="CHEBI:49883"/>
        <label>2</label>
        <note>4Fe-4S-S-AdoMet</note>
    </ligand>
</feature>
<feature type="binding site" evidence="1">
    <location>
        <position position="151"/>
    </location>
    <ligand>
        <name>[4Fe-4S] cluster</name>
        <dbReference type="ChEBI" id="CHEBI:49883"/>
        <label>2</label>
        <note>4Fe-4S-S-AdoMet</note>
    </ligand>
</feature>
<feature type="binding site" evidence="1">
    <location>
        <position position="154"/>
    </location>
    <ligand>
        <name>[4Fe-4S] cluster</name>
        <dbReference type="ChEBI" id="CHEBI:49883"/>
        <label>2</label>
        <note>4Fe-4S-S-AdoMet</note>
    </ligand>
</feature>
<dbReference type="EC" id="2.8.4.4" evidence="1"/>
<dbReference type="EMBL" id="AP007255">
    <property type="protein sequence ID" value="BAE51851.1"/>
    <property type="molecule type" value="Genomic_DNA"/>
</dbReference>
<dbReference type="RefSeq" id="WP_011385423.1">
    <property type="nucleotide sequence ID" value="NC_007626.1"/>
</dbReference>
<dbReference type="SMR" id="Q2W2S4"/>
<dbReference type="STRING" id="342108.amb3047"/>
<dbReference type="KEGG" id="mag:amb3047"/>
<dbReference type="HOGENOM" id="CLU_018697_0_0_5"/>
<dbReference type="OrthoDB" id="9805215at2"/>
<dbReference type="Proteomes" id="UP000007058">
    <property type="component" value="Chromosome"/>
</dbReference>
<dbReference type="GO" id="GO:0005829">
    <property type="term" value="C:cytosol"/>
    <property type="evidence" value="ECO:0007669"/>
    <property type="project" value="TreeGrafter"/>
</dbReference>
<dbReference type="GO" id="GO:0051539">
    <property type="term" value="F:4 iron, 4 sulfur cluster binding"/>
    <property type="evidence" value="ECO:0007669"/>
    <property type="project" value="UniProtKB-UniRule"/>
</dbReference>
<dbReference type="GO" id="GO:0035599">
    <property type="term" value="F:aspartic acid methylthiotransferase activity"/>
    <property type="evidence" value="ECO:0007669"/>
    <property type="project" value="TreeGrafter"/>
</dbReference>
<dbReference type="GO" id="GO:0046872">
    <property type="term" value="F:metal ion binding"/>
    <property type="evidence" value="ECO:0007669"/>
    <property type="project" value="UniProtKB-KW"/>
</dbReference>
<dbReference type="GO" id="GO:0103039">
    <property type="term" value="F:protein methylthiotransferase activity"/>
    <property type="evidence" value="ECO:0007669"/>
    <property type="project" value="UniProtKB-EC"/>
</dbReference>
<dbReference type="GO" id="GO:0006400">
    <property type="term" value="P:tRNA modification"/>
    <property type="evidence" value="ECO:0007669"/>
    <property type="project" value="InterPro"/>
</dbReference>
<dbReference type="CDD" id="cd01335">
    <property type="entry name" value="Radical_SAM"/>
    <property type="match status" value="1"/>
</dbReference>
<dbReference type="FunFam" id="2.40.50.140:FF:000060">
    <property type="entry name" value="Ribosomal protein S12 methylthiotransferase RimO"/>
    <property type="match status" value="1"/>
</dbReference>
<dbReference type="FunFam" id="3.40.50.12160:FF:000002">
    <property type="entry name" value="Ribosomal protein S12 methylthiotransferase RimO"/>
    <property type="match status" value="1"/>
</dbReference>
<dbReference type="FunFam" id="3.80.30.20:FF:000001">
    <property type="entry name" value="tRNA-2-methylthio-N(6)-dimethylallyladenosine synthase 2"/>
    <property type="match status" value="1"/>
</dbReference>
<dbReference type="Gene3D" id="3.40.50.12160">
    <property type="entry name" value="Methylthiotransferase, N-terminal domain"/>
    <property type="match status" value="1"/>
</dbReference>
<dbReference type="Gene3D" id="2.40.50.140">
    <property type="entry name" value="Nucleic acid-binding proteins"/>
    <property type="match status" value="1"/>
</dbReference>
<dbReference type="Gene3D" id="3.80.30.20">
    <property type="entry name" value="tm_1862 like domain"/>
    <property type="match status" value="1"/>
</dbReference>
<dbReference type="HAMAP" id="MF_01865">
    <property type="entry name" value="MTTase_RimO"/>
    <property type="match status" value="1"/>
</dbReference>
<dbReference type="InterPro" id="IPR006638">
    <property type="entry name" value="Elp3/MiaA/NifB-like_rSAM"/>
</dbReference>
<dbReference type="InterPro" id="IPR005839">
    <property type="entry name" value="Methylthiotransferase"/>
</dbReference>
<dbReference type="InterPro" id="IPR020612">
    <property type="entry name" value="Methylthiotransferase_CS"/>
</dbReference>
<dbReference type="InterPro" id="IPR013848">
    <property type="entry name" value="Methylthiotransferase_N"/>
</dbReference>
<dbReference type="InterPro" id="IPR038135">
    <property type="entry name" value="Methylthiotransferase_N_sf"/>
</dbReference>
<dbReference type="InterPro" id="IPR012340">
    <property type="entry name" value="NA-bd_OB-fold"/>
</dbReference>
<dbReference type="InterPro" id="IPR005840">
    <property type="entry name" value="Ribosomal_uS12_MeSTrfase_RimO"/>
</dbReference>
<dbReference type="InterPro" id="IPR007197">
    <property type="entry name" value="rSAM"/>
</dbReference>
<dbReference type="InterPro" id="IPR023404">
    <property type="entry name" value="rSAM_horseshoe"/>
</dbReference>
<dbReference type="InterPro" id="IPR002792">
    <property type="entry name" value="TRAM_dom"/>
</dbReference>
<dbReference type="NCBIfam" id="TIGR01125">
    <property type="entry name" value="30S ribosomal protein S12 methylthiotransferase RimO"/>
    <property type="match status" value="1"/>
</dbReference>
<dbReference type="NCBIfam" id="TIGR00089">
    <property type="entry name" value="MiaB/RimO family radical SAM methylthiotransferase"/>
    <property type="match status" value="1"/>
</dbReference>
<dbReference type="PANTHER" id="PTHR43837">
    <property type="entry name" value="RIBOSOMAL PROTEIN S12 METHYLTHIOTRANSFERASE RIMO"/>
    <property type="match status" value="1"/>
</dbReference>
<dbReference type="PANTHER" id="PTHR43837:SF1">
    <property type="entry name" value="RIBOSOMAL PROTEIN US12 METHYLTHIOTRANSFERASE RIMO"/>
    <property type="match status" value="1"/>
</dbReference>
<dbReference type="Pfam" id="PF04055">
    <property type="entry name" value="Radical_SAM"/>
    <property type="match status" value="1"/>
</dbReference>
<dbReference type="Pfam" id="PF18693">
    <property type="entry name" value="TRAM_2"/>
    <property type="match status" value="1"/>
</dbReference>
<dbReference type="Pfam" id="PF00919">
    <property type="entry name" value="UPF0004"/>
    <property type="match status" value="1"/>
</dbReference>
<dbReference type="SFLD" id="SFLDG01082">
    <property type="entry name" value="B12-binding_domain_containing"/>
    <property type="match status" value="1"/>
</dbReference>
<dbReference type="SFLD" id="SFLDG01061">
    <property type="entry name" value="methylthiotransferase"/>
    <property type="match status" value="1"/>
</dbReference>
<dbReference type="SFLD" id="SFLDF00274">
    <property type="entry name" value="ribosomal_protein_S12_methylth"/>
    <property type="match status" value="1"/>
</dbReference>
<dbReference type="SMART" id="SM00729">
    <property type="entry name" value="Elp3"/>
    <property type="match status" value="1"/>
</dbReference>
<dbReference type="SUPFAM" id="SSF102114">
    <property type="entry name" value="Radical SAM enzymes"/>
    <property type="match status" value="1"/>
</dbReference>
<dbReference type="PROSITE" id="PS51449">
    <property type="entry name" value="MTTASE_N"/>
    <property type="match status" value="1"/>
</dbReference>
<dbReference type="PROSITE" id="PS01278">
    <property type="entry name" value="MTTASE_RADICAL"/>
    <property type="match status" value="1"/>
</dbReference>
<dbReference type="PROSITE" id="PS51918">
    <property type="entry name" value="RADICAL_SAM"/>
    <property type="match status" value="1"/>
</dbReference>
<dbReference type="PROSITE" id="PS50926">
    <property type="entry name" value="TRAM"/>
    <property type="match status" value="1"/>
</dbReference>
<organism>
    <name type="scientific">Paramagnetospirillum magneticum (strain ATCC 700264 / AMB-1)</name>
    <name type="common">Magnetospirillum magneticum</name>
    <dbReference type="NCBI Taxonomy" id="342108"/>
    <lineage>
        <taxon>Bacteria</taxon>
        <taxon>Pseudomonadati</taxon>
        <taxon>Pseudomonadota</taxon>
        <taxon>Alphaproteobacteria</taxon>
        <taxon>Rhodospirillales</taxon>
        <taxon>Magnetospirillaceae</taxon>
        <taxon>Paramagnetospirillum</taxon>
    </lineage>
</organism>
<reference key="1">
    <citation type="journal article" date="2005" name="DNA Res.">
        <title>Complete genome sequence of the facultative anaerobic magnetotactic bacterium Magnetospirillum sp. strain AMB-1.</title>
        <authorList>
            <person name="Matsunaga T."/>
            <person name="Okamura Y."/>
            <person name="Fukuda Y."/>
            <person name="Wahyudi A.T."/>
            <person name="Murase Y."/>
            <person name="Takeyama H."/>
        </authorList>
    </citation>
    <scope>NUCLEOTIDE SEQUENCE [LARGE SCALE GENOMIC DNA]</scope>
    <source>
        <strain>ATCC 700264 / AMB-1</strain>
    </source>
</reference>
<proteinExistence type="inferred from homology"/>
<comment type="function">
    <text evidence="1">Catalyzes the methylthiolation of an aspartic acid residue of ribosomal protein uS12.</text>
</comment>
<comment type="catalytic activity">
    <reaction evidence="1">
        <text>L-aspartate(89)-[ribosomal protein uS12]-hydrogen + (sulfur carrier)-SH + AH2 + 2 S-adenosyl-L-methionine = 3-methylsulfanyl-L-aspartate(89)-[ribosomal protein uS12]-hydrogen + (sulfur carrier)-H + 5'-deoxyadenosine + L-methionine + A + S-adenosyl-L-homocysteine + 2 H(+)</text>
        <dbReference type="Rhea" id="RHEA:37087"/>
        <dbReference type="Rhea" id="RHEA-COMP:10460"/>
        <dbReference type="Rhea" id="RHEA-COMP:10461"/>
        <dbReference type="Rhea" id="RHEA-COMP:14737"/>
        <dbReference type="Rhea" id="RHEA-COMP:14739"/>
        <dbReference type="ChEBI" id="CHEBI:13193"/>
        <dbReference type="ChEBI" id="CHEBI:15378"/>
        <dbReference type="ChEBI" id="CHEBI:17319"/>
        <dbReference type="ChEBI" id="CHEBI:17499"/>
        <dbReference type="ChEBI" id="CHEBI:29917"/>
        <dbReference type="ChEBI" id="CHEBI:29961"/>
        <dbReference type="ChEBI" id="CHEBI:57844"/>
        <dbReference type="ChEBI" id="CHEBI:57856"/>
        <dbReference type="ChEBI" id="CHEBI:59789"/>
        <dbReference type="ChEBI" id="CHEBI:64428"/>
        <dbReference type="ChEBI" id="CHEBI:73599"/>
        <dbReference type="EC" id="2.8.4.4"/>
    </reaction>
</comment>
<comment type="cofactor">
    <cofactor evidence="1">
        <name>[4Fe-4S] cluster</name>
        <dbReference type="ChEBI" id="CHEBI:49883"/>
    </cofactor>
    <text evidence="1">Binds 2 [4Fe-4S] clusters. One cluster is coordinated with 3 cysteines and an exchangeable S-adenosyl-L-methionine.</text>
</comment>
<comment type="subcellular location">
    <subcellularLocation>
        <location evidence="1">Cytoplasm</location>
    </subcellularLocation>
</comment>
<comment type="similarity">
    <text evidence="1">Belongs to the methylthiotransferase family. RimO subfamily.</text>
</comment>
<name>RIMO_PARM1</name>
<accession>Q2W2S4</accession>
<gene>
    <name evidence="1" type="primary">rimO</name>
    <name type="ordered locus">amb3047</name>
</gene>
<protein>
    <recommendedName>
        <fullName evidence="1">Ribosomal protein uS12 methylthiotransferase RimO</fullName>
        <shortName evidence="1">uS12 MTTase</shortName>
        <shortName evidence="1">uS12 methylthiotransferase</shortName>
        <ecNumber evidence="1">2.8.4.4</ecNumber>
    </recommendedName>
    <alternativeName>
        <fullName evidence="1">Ribosomal protein uS12 (aspartate-C(3))-methylthiotransferase</fullName>
    </alternativeName>
    <alternativeName>
        <fullName evidence="1">Ribosome maturation factor RimO</fullName>
    </alternativeName>
</protein>
<keyword id="KW-0004">4Fe-4S</keyword>
<keyword id="KW-0963">Cytoplasm</keyword>
<keyword id="KW-0408">Iron</keyword>
<keyword id="KW-0411">Iron-sulfur</keyword>
<keyword id="KW-0479">Metal-binding</keyword>
<keyword id="KW-0949">S-adenosyl-L-methionine</keyword>
<keyword id="KW-0808">Transferase</keyword>